<feature type="chain" id="PRO_0000217165" description="Putative hydro-lyase blr2921">
    <location>
        <begin position="1"/>
        <end position="271"/>
    </location>
</feature>
<name>Y2921_BRADU</name>
<proteinExistence type="inferred from homology"/>
<protein>
    <recommendedName>
        <fullName evidence="1">Putative hydro-lyase blr2921</fullName>
        <ecNumber evidence="1">4.2.1.-</ecNumber>
    </recommendedName>
</protein>
<organism>
    <name type="scientific">Bradyrhizobium diazoefficiens (strain JCM 10833 / BCRC 13528 / IAM 13628 / NBRC 14792 / USDA 110)</name>
    <dbReference type="NCBI Taxonomy" id="224911"/>
    <lineage>
        <taxon>Bacteria</taxon>
        <taxon>Pseudomonadati</taxon>
        <taxon>Pseudomonadota</taxon>
        <taxon>Alphaproteobacteria</taxon>
        <taxon>Hyphomicrobiales</taxon>
        <taxon>Nitrobacteraceae</taxon>
        <taxon>Bradyrhizobium</taxon>
    </lineage>
</organism>
<accession>Q89R51</accession>
<evidence type="ECO:0000255" key="1">
    <source>
        <dbReference type="HAMAP-Rule" id="MF_01830"/>
    </source>
</evidence>
<reference key="1">
    <citation type="journal article" date="2002" name="DNA Res.">
        <title>Complete genomic sequence of nitrogen-fixing symbiotic bacterium Bradyrhizobium japonicum USDA110.</title>
        <authorList>
            <person name="Kaneko T."/>
            <person name="Nakamura Y."/>
            <person name="Sato S."/>
            <person name="Minamisawa K."/>
            <person name="Uchiumi T."/>
            <person name="Sasamoto S."/>
            <person name="Watanabe A."/>
            <person name="Idesawa K."/>
            <person name="Iriguchi M."/>
            <person name="Kawashima K."/>
            <person name="Kohara M."/>
            <person name="Matsumoto M."/>
            <person name="Shimpo S."/>
            <person name="Tsuruoka H."/>
            <person name="Wada T."/>
            <person name="Yamada M."/>
            <person name="Tabata S."/>
        </authorList>
    </citation>
    <scope>NUCLEOTIDE SEQUENCE [LARGE SCALE GENOMIC DNA]</scope>
    <source>
        <strain>JCM 10833 / BCRC 13528 / IAM 13628 / NBRC 14792 / USDA 110</strain>
    </source>
</reference>
<dbReference type="EC" id="4.2.1.-" evidence="1"/>
<dbReference type="EMBL" id="BA000040">
    <property type="protein sequence ID" value="BAC48186.1"/>
    <property type="molecule type" value="Genomic_DNA"/>
</dbReference>
<dbReference type="RefSeq" id="NP_769561.1">
    <property type="nucleotide sequence ID" value="NC_004463.1"/>
</dbReference>
<dbReference type="RefSeq" id="WP_011085705.1">
    <property type="nucleotide sequence ID" value="NC_004463.1"/>
</dbReference>
<dbReference type="SMR" id="Q89R51"/>
<dbReference type="STRING" id="224911.AAV28_11625"/>
<dbReference type="EnsemblBacteria" id="BAC48186">
    <property type="protein sequence ID" value="BAC48186"/>
    <property type="gene ID" value="BAC48186"/>
</dbReference>
<dbReference type="GeneID" id="46489962"/>
<dbReference type="KEGG" id="bja:blr2921"/>
<dbReference type="PATRIC" id="fig|224911.44.peg.2546"/>
<dbReference type="eggNOG" id="COG4336">
    <property type="taxonomic scope" value="Bacteria"/>
</dbReference>
<dbReference type="HOGENOM" id="CLU_059759_0_0_5"/>
<dbReference type="InParanoid" id="Q89R51"/>
<dbReference type="OrthoDB" id="149585at2"/>
<dbReference type="PhylomeDB" id="Q89R51"/>
<dbReference type="Proteomes" id="UP000002526">
    <property type="component" value="Chromosome"/>
</dbReference>
<dbReference type="GO" id="GO:0016829">
    <property type="term" value="F:lyase activity"/>
    <property type="evidence" value="ECO:0007669"/>
    <property type="project" value="UniProtKB-KW"/>
</dbReference>
<dbReference type="FunFam" id="3.30.2040.10:FF:000001">
    <property type="entry name" value="D-glutamate cyclase, mitochondrial"/>
    <property type="match status" value="1"/>
</dbReference>
<dbReference type="Gene3D" id="3.40.1640.10">
    <property type="entry name" value="PSTPO5379-like"/>
    <property type="match status" value="1"/>
</dbReference>
<dbReference type="Gene3D" id="3.30.2040.10">
    <property type="entry name" value="PSTPO5379-like domain"/>
    <property type="match status" value="1"/>
</dbReference>
<dbReference type="HAMAP" id="MF_01830">
    <property type="entry name" value="Hydro_lyase"/>
    <property type="match status" value="1"/>
</dbReference>
<dbReference type="InterPro" id="IPR009906">
    <property type="entry name" value="D-Glu_cyclase"/>
</dbReference>
<dbReference type="InterPro" id="IPR038021">
    <property type="entry name" value="Putative_hydro-lyase"/>
</dbReference>
<dbReference type="InterPro" id="IPR016938">
    <property type="entry name" value="UPF0317"/>
</dbReference>
<dbReference type="NCBIfam" id="NF003969">
    <property type="entry name" value="PRK05463.1"/>
    <property type="match status" value="1"/>
</dbReference>
<dbReference type="PANTHER" id="PTHR32022">
    <property type="entry name" value="D-GLUTAMATE CYCLASE, MITOCHONDRIAL"/>
    <property type="match status" value="1"/>
</dbReference>
<dbReference type="PANTHER" id="PTHR32022:SF10">
    <property type="entry name" value="D-GLUTAMATE CYCLASE, MITOCHONDRIAL"/>
    <property type="match status" value="1"/>
</dbReference>
<dbReference type="Pfam" id="PF07286">
    <property type="entry name" value="D-Glu_cyclase"/>
    <property type="match status" value="1"/>
</dbReference>
<dbReference type="PIRSF" id="PIRSF029755">
    <property type="entry name" value="UCP029755"/>
    <property type="match status" value="1"/>
</dbReference>
<dbReference type="SUPFAM" id="SSF160920">
    <property type="entry name" value="PSTPO5379-like"/>
    <property type="match status" value="1"/>
</dbReference>
<sequence length="271" mass="29326">MTVLVAAQQTETPDPLPSRQARLAYRGGEVGSTAGVAPGFVQGNLAILPAEYASAFHRFCQLNPKPCPIIGMSDVGSPHIPALGADLDIRTDVPRYRVWRDGEVVDEPTDVTGYWRDDLVTFVLGCSFSFEEALLDEGMPIRHIEQNVRVPMYRTNIACGEAGPFAGPMVVSMRPFKPADAIRAVQITSRYPAVHGAPVHLGHPHLIGIKDIAKPDYGDPVPVADDEIPVFWACGVTPQSVINAARLPFAITHSPGLMLVTDLKNRTMAVI</sequence>
<gene>
    <name type="ordered locus">blr2921</name>
</gene>
<keyword id="KW-0456">Lyase</keyword>
<keyword id="KW-1185">Reference proteome</keyword>
<comment type="similarity">
    <text evidence="1">Belongs to the D-glutamate cyclase family.</text>
</comment>